<accession>Q2S2B6</accession>
<reference key="1">
    <citation type="journal article" date="2005" name="Proc. Natl. Acad. Sci. U.S.A.">
        <title>The genome of Salinibacter ruber: convergence and gene exchange among hyperhalophilic bacteria and archaea.</title>
        <authorList>
            <person name="Mongodin E.F."/>
            <person name="Nelson K.E."/>
            <person name="Daugherty S."/>
            <person name="DeBoy R.T."/>
            <person name="Wister J."/>
            <person name="Khouri H."/>
            <person name="Weidman J."/>
            <person name="Walsh D.A."/>
            <person name="Papke R.T."/>
            <person name="Sanchez Perez G."/>
            <person name="Sharma A.K."/>
            <person name="Nesbo C.L."/>
            <person name="MacLeod D."/>
            <person name="Bapteste E."/>
            <person name="Doolittle W.F."/>
            <person name="Charlebois R.L."/>
            <person name="Legault B."/>
            <person name="Rodriguez-Valera F."/>
        </authorList>
    </citation>
    <scope>NUCLEOTIDE SEQUENCE [LARGE SCALE GENOMIC DNA]</scope>
    <source>
        <strain>DSM 13855 / CECT 5946 / M31</strain>
    </source>
</reference>
<dbReference type="EC" id="6.1.1.7" evidence="1"/>
<dbReference type="EMBL" id="CP000159">
    <property type="protein sequence ID" value="ABC43801.1"/>
    <property type="molecule type" value="Genomic_DNA"/>
</dbReference>
<dbReference type="RefSeq" id="WP_011404291.1">
    <property type="nucleotide sequence ID" value="NC_007677.1"/>
</dbReference>
<dbReference type="RefSeq" id="YP_445665.1">
    <property type="nucleotide sequence ID" value="NC_007677.1"/>
</dbReference>
<dbReference type="SMR" id="Q2S2B6"/>
<dbReference type="STRING" id="309807.SRU_1544"/>
<dbReference type="EnsemblBacteria" id="ABC43801">
    <property type="protein sequence ID" value="ABC43801"/>
    <property type="gene ID" value="SRU_1544"/>
</dbReference>
<dbReference type="KEGG" id="sru:SRU_1544"/>
<dbReference type="PATRIC" id="fig|309807.25.peg.1598"/>
<dbReference type="eggNOG" id="COG0013">
    <property type="taxonomic scope" value="Bacteria"/>
</dbReference>
<dbReference type="HOGENOM" id="CLU_004485_1_1_10"/>
<dbReference type="OrthoDB" id="9803884at2"/>
<dbReference type="Proteomes" id="UP000008674">
    <property type="component" value="Chromosome"/>
</dbReference>
<dbReference type="GO" id="GO:0005737">
    <property type="term" value="C:cytoplasm"/>
    <property type="evidence" value="ECO:0007669"/>
    <property type="project" value="UniProtKB-SubCell"/>
</dbReference>
<dbReference type="GO" id="GO:0004813">
    <property type="term" value="F:alanine-tRNA ligase activity"/>
    <property type="evidence" value="ECO:0007669"/>
    <property type="project" value="UniProtKB-UniRule"/>
</dbReference>
<dbReference type="GO" id="GO:0002161">
    <property type="term" value="F:aminoacyl-tRNA deacylase activity"/>
    <property type="evidence" value="ECO:0007669"/>
    <property type="project" value="TreeGrafter"/>
</dbReference>
<dbReference type="GO" id="GO:0005524">
    <property type="term" value="F:ATP binding"/>
    <property type="evidence" value="ECO:0007669"/>
    <property type="project" value="UniProtKB-UniRule"/>
</dbReference>
<dbReference type="GO" id="GO:0000049">
    <property type="term" value="F:tRNA binding"/>
    <property type="evidence" value="ECO:0007669"/>
    <property type="project" value="UniProtKB-KW"/>
</dbReference>
<dbReference type="GO" id="GO:0008270">
    <property type="term" value="F:zinc ion binding"/>
    <property type="evidence" value="ECO:0007669"/>
    <property type="project" value="UniProtKB-UniRule"/>
</dbReference>
<dbReference type="GO" id="GO:0006419">
    <property type="term" value="P:alanyl-tRNA aminoacylation"/>
    <property type="evidence" value="ECO:0007669"/>
    <property type="project" value="UniProtKB-UniRule"/>
</dbReference>
<dbReference type="CDD" id="cd00673">
    <property type="entry name" value="AlaRS_core"/>
    <property type="match status" value="1"/>
</dbReference>
<dbReference type="FunFam" id="3.10.310.40:FF:000001">
    <property type="entry name" value="Alanine--tRNA ligase"/>
    <property type="match status" value="1"/>
</dbReference>
<dbReference type="FunFam" id="3.30.54.20:FF:000001">
    <property type="entry name" value="Alanine--tRNA ligase"/>
    <property type="match status" value="1"/>
</dbReference>
<dbReference type="FunFam" id="3.30.930.10:FF:000011">
    <property type="entry name" value="Alanine--tRNA ligase, cytoplasmic"/>
    <property type="match status" value="1"/>
</dbReference>
<dbReference type="FunFam" id="3.30.980.10:FF:000004">
    <property type="entry name" value="Alanine--tRNA ligase, cytoplasmic"/>
    <property type="match status" value="1"/>
</dbReference>
<dbReference type="Gene3D" id="2.40.30.130">
    <property type="match status" value="1"/>
</dbReference>
<dbReference type="Gene3D" id="3.10.310.40">
    <property type="match status" value="1"/>
</dbReference>
<dbReference type="Gene3D" id="3.30.54.20">
    <property type="match status" value="1"/>
</dbReference>
<dbReference type="Gene3D" id="3.30.930.10">
    <property type="entry name" value="Bira Bifunctional Protein, Domain 2"/>
    <property type="match status" value="1"/>
</dbReference>
<dbReference type="Gene3D" id="3.30.980.10">
    <property type="entry name" value="Threonyl-trna Synthetase, Chain A, domain 2"/>
    <property type="match status" value="1"/>
</dbReference>
<dbReference type="HAMAP" id="MF_00036_B">
    <property type="entry name" value="Ala_tRNA_synth_B"/>
    <property type="match status" value="1"/>
</dbReference>
<dbReference type="InterPro" id="IPR045864">
    <property type="entry name" value="aa-tRNA-synth_II/BPL/LPL"/>
</dbReference>
<dbReference type="InterPro" id="IPR002318">
    <property type="entry name" value="Ala-tRNA-lgiase_IIc"/>
</dbReference>
<dbReference type="InterPro" id="IPR018162">
    <property type="entry name" value="Ala-tRNA-ligase_IIc_anticod-bd"/>
</dbReference>
<dbReference type="InterPro" id="IPR018165">
    <property type="entry name" value="Ala-tRNA-synth_IIc_core"/>
</dbReference>
<dbReference type="InterPro" id="IPR018164">
    <property type="entry name" value="Ala-tRNA-synth_IIc_N"/>
</dbReference>
<dbReference type="InterPro" id="IPR050058">
    <property type="entry name" value="Ala-tRNA_ligase"/>
</dbReference>
<dbReference type="InterPro" id="IPR023033">
    <property type="entry name" value="Ala_tRNA_ligase_euk/bac"/>
</dbReference>
<dbReference type="InterPro" id="IPR003156">
    <property type="entry name" value="DHHA1_dom"/>
</dbReference>
<dbReference type="InterPro" id="IPR018163">
    <property type="entry name" value="Thr/Ala-tRNA-synth_IIc_edit"/>
</dbReference>
<dbReference type="InterPro" id="IPR009000">
    <property type="entry name" value="Transl_B-barrel_sf"/>
</dbReference>
<dbReference type="InterPro" id="IPR012947">
    <property type="entry name" value="tRNA_SAD"/>
</dbReference>
<dbReference type="NCBIfam" id="TIGR00344">
    <property type="entry name" value="alaS"/>
    <property type="match status" value="1"/>
</dbReference>
<dbReference type="PANTHER" id="PTHR11777:SF9">
    <property type="entry name" value="ALANINE--TRNA LIGASE, CYTOPLASMIC"/>
    <property type="match status" value="1"/>
</dbReference>
<dbReference type="PANTHER" id="PTHR11777">
    <property type="entry name" value="ALANYL-TRNA SYNTHETASE"/>
    <property type="match status" value="1"/>
</dbReference>
<dbReference type="Pfam" id="PF02272">
    <property type="entry name" value="DHHA1"/>
    <property type="match status" value="1"/>
</dbReference>
<dbReference type="Pfam" id="PF01411">
    <property type="entry name" value="tRNA-synt_2c"/>
    <property type="match status" value="2"/>
</dbReference>
<dbReference type="Pfam" id="PF07973">
    <property type="entry name" value="tRNA_SAD"/>
    <property type="match status" value="1"/>
</dbReference>
<dbReference type="PRINTS" id="PR00980">
    <property type="entry name" value="TRNASYNTHALA"/>
</dbReference>
<dbReference type="SMART" id="SM00863">
    <property type="entry name" value="tRNA_SAD"/>
    <property type="match status" value="1"/>
</dbReference>
<dbReference type="SUPFAM" id="SSF55681">
    <property type="entry name" value="Class II aaRS and biotin synthetases"/>
    <property type="match status" value="1"/>
</dbReference>
<dbReference type="SUPFAM" id="SSF101353">
    <property type="entry name" value="Putative anticodon-binding domain of alanyl-tRNA synthetase (AlaRS)"/>
    <property type="match status" value="1"/>
</dbReference>
<dbReference type="SUPFAM" id="SSF55186">
    <property type="entry name" value="ThrRS/AlaRS common domain"/>
    <property type="match status" value="1"/>
</dbReference>
<dbReference type="SUPFAM" id="SSF50447">
    <property type="entry name" value="Translation proteins"/>
    <property type="match status" value="1"/>
</dbReference>
<dbReference type="PROSITE" id="PS50860">
    <property type="entry name" value="AA_TRNA_LIGASE_II_ALA"/>
    <property type="match status" value="1"/>
</dbReference>
<protein>
    <recommendedName>
        <fullName evidence="1">Alanine--tRNA ligase</fullName>
        <ecNumber evidence="1">6.1.1.7</ecNumber>
    </recommendedName>
    <alternativeName>
        <fullName evidence="1">Alanyl-tRNA synthetase</fullName>
        <shortName evidence="1">AlaRS</shortName>
    </alternativeName>
</protein>
<evidence type="ECO:0000255" key="1">
    <source>
        <dbReference type="HAMAP-Rule" id="MF_00036"/>
    </source>
</evidence>
<evidence type="ECO:0000256" key="2">
    <source>
        <dbReference type="SAM" id="MobiDB-lite"/>
    </source>
</evidence>
<proteinExistence type="inferred from homology"/>
<organism>
    <name type="scientific">Salinibacter ruber (strain DSM 13855 / M31)</name>
    <dbReference type="NCBI Taxonomy" id="309807"/>
    <lineage>
        <taxon>Bacteria</taxon>
        <taxon>Pseudomonadati</taxon>
        <taxon>Rhodothermota</taxon>
        <taxon>Rhodothermia</taxon>
        <taxon>Rhodothermales</taxon>
        <taxon>Salinibacteraceae</taxon>
        <taxon>Salinibacter</taxon>
    </lineage>
</organism>
<gene>
    <name evidence="1" type="primary">alaS</name>
    <name type="ordered locus">SRU_1544</name>
</gene>
<feature type="chain" id="PRO_0000347774" description="Alanine--tRNA ligase">
    <location>
        <begin position="1"/>
        <end position="966"/>
    </location>
</feature>
<feature type="region of interest" description="Disordered" evidence="2">
    <location>
        <begin position="927"/>
        <end position="949"/>
    </location>
</feature>
<feature type="binding site" evidence="1">
    <location>
        <position position="646"/>
    </location>
    <ligand>
        <name>Zn(2+)</name>
        <dbReference type="ChEBI" id="CHEBI:29105"/>
    </ligand>
</feature>
<feature type="binding site" evidence="1">
    <location>
        <position position="650"/>
    </location>
    <ligand>
        <name>Zn(2+)</name>
        <dbReference type="ChEBI" id="CHEBI:29105"/>
    </ligand>
</feature>
<feature type="binding site" evidence="1">
    <location>
        <position position="750"/>
    </location>
    <ligand>
        <name>Zn(2+)</name>
        <dbReference type="ChEBI" id="CHEBI:29105"/>
    </ligand>
</feature>
<feature type="binding site" evidence="1">
    <location>
        <position position="754"/>
    </location>
    <ligand>
        <name>Zn(2+)</name>
        <dbReference type="ChEBI" id="CHEBI:29105"/>
    </ligand>
</feature>
<sequence length="966" mass="107424">MSHDPMNPHLQSSADPSRSSEEIRQDFLQFFQAKGHEVVPSASLVPDGDGTLLFTNAGMNQFKDVFLGTGQRPYSRAVDTQKCLRVSGKHNDLEEVGHDTYHHTFFEMLGNWSFGDYFKAEAIRWAWELLVERWGLAPDRLYATVHEGDDDFGLSADAEAYDLWLSETPLPEERVLYEPSKENFWMMGDTGPCGPCSELHVDLRPPEARQETPGRELVNVDHPQVMELWNLVFIQYNAQTDGSLEPLDDQHVDTGMGFERMVAVLQGKESTYDTDLFAPLLQAMADRSPREEIRGYDDLHIEDDDEHEQVRIALRVVADHIRAIAFAISDGVMPSNEGRGYVIRRILRRAVRYGYQTLELEEPFLHRLVDPLIEKMGGPFDGLAEQQEFIEQAIRSEEESFLETLGTGIEFFERVVPHVTGFQDTDGEESDRLLGALREDAQAMDLLEKAYVDTDDENDILHSFARTARGGTLPGQIAFLLHDTYGFPIDLTRLMARERDLDVDMEGYETLMDRQQERARAASDFAVDQSDVQAWQSVSPGEASVFVGYDRAVVPDAEVRAVRVVETGDTQQYEVELSRTPFYAEAGGQVGDTGTLRFGDESVQVLDTQREGERIAHTVDTLPEPLDGPVEAAVDAERRNHIRAHHTATHLMHAVLRETLGDHVQQKGSLVAPDRLRFDFSHFDAVDEDTLRHIERRVNTAIQQNIPKQEARDVPIDEALDRGATALFDEQYGDRVRVITFDPDFSMELCGGTHVDATGEIGLFRFLSEGSVASGVRRVEAVAGKAALEHVESELETLTRARRQFRSLHTSLPEAIAEVQEERDRLAGEVDQLRRGQLSDQLDTFIAENAASVDGITVVTGRLDRASMDDLQELGQQFRDKLGEGAVGVLGSVGEDGEKAYVVATVADDLVDDGALRAGDLVGTLGDRLGGGGGGRPSLASAGGRDPEALDTVLDGVPALVRDRLE</sequence>
<keyword id="KW-0030">Aminoacyl-tRNA synthetase</keyword>
<keyword id="KW-0067">ATP-binding</keyword>
<keyword id="KW-0963">Cytoplasm</keyword>
<keyword id="KW-0436">Ligase</keyword>
<keyword id="KW-0479">Metal-binding</keyword>
<keyword id="KW-0547">Nucleotide-binding</keyword>
<keyword id="KW-0648">Protein biosynthesis</keyword>
<keyword id="KW-1185">Reference proteome</keyword>
<keyword id="KW-0694">RNA-binding</keyword>
<keyword id="KW-0820">tRNA-binding</keyword>
<keyword id="KW-0862">Zinc</keyword>
<comment type="function">
    <text evidence="1">Catalyzes the attachment of alanine to tRNA(Ala) in a two-step reaction: alanine is first activated by ATP to form Ala-AMP and then transferred to the acceptor end of tRNA(Ala). Also edits incorrectly charged Ser-tRNA(Ala) and Gly-tRNA(Ala) via its editing domain.</text>
</comment>
<comment type="catalytic activity">
    <reaction evidence="1">
        <text>tRNA(Ala) + L-alanine + ATP = L-alanyl-tRNA(Ala) + AMP + diphosphate</text>
        <dbReference type="Rhea" id="RHEA:12540"/>
        <dbReference type="Rhea" id="RHEA-COMP:9657"/>
        <dbReference type="Rhea" id="RHEA-COMP:9923"/>
        <dbReference type="ChEBI" id="CHEBI:30616"/>
        <dbReference type="ChEBI" id="CHEBI:33019"/>
        <dbReference type="ChEBI" id="CHEBI:57972"/>
        <dbReference type="ChEBI" id="CHEBI:78442"/>
        <dbReference type="ChEBI" id="CHEBI:78497"/>
        <dbReference type="ChEBI" id="CHEBI:456215"/>
        <dbReference type="EC" id="6.1.1.7"/>
    </reaction>
</comment>
<comment type="cofactor">
    <cofactor evidence="1">
        <name>Zn(2+)</name>
        <dbReference type="ChEBI" id="CHEBI:29105"/>
    </cofactor>
    <text evidence="1">Binds 1 zinc ion per subunit.</text>
</comment>
<comment type="subcellular location">
    <subcellularLocation>
        <location evidence="1">Cytoplasm</location>
    </subcellularLocation>
</comment>
<comment type="domain">
    <text evidence="1">Consists of three domains; the N-terminal catalytic domain, the editing domain and the C-terminal C-Ala domain. The editing domain removes incorrectly charged amino acids, while the C-Ala domain, along with tRNA(Ala), serves as a bridge to cooperatively bring together the editing and aminoacylation centers thus stimulating deacylation of misacylated tRNAs.</text>
</comment>
<comment type="similarity">
    <text evidence="1">Belongs to the class-II aminoacyl-tRNA synthetase family.</text>
</comment>
<name>SYA_SALRD</name>